<feature type="chain" id="PRO_1000018117" description="Arginine--tRNA ligase">
    <location>
        <begin position="1"/>
        <end position="581"/>
    </location>
</feature>
<feature type="short sequence motif" description="'HIGH' region">
    <location>
        <begin position="126"/>
        <end position="136"/>
    </location>
</feature>
<sequence length="581" mass="64903">MKSHIQSLLEQTIESFKQQGILPADFEARIQVDRTKDKSHGDLATNLAMMLTKVAGKNPRELAQLIIDTLPASAFVAKVEIAGPGFINFFINDSALADQLQNAVNDEHLGIKLPTPQTVVVDYSSPNLAKEMHVGHLRSTIIGDSVVRALEFLGHKVIRQNHVGDWGTQFGMLLAYMEELRAKNGEQAHLELSDLETFYRAAKLRFDESAEFATRARQLVVELQSGDEYCNKLWREFNDISLSHCHEVYARLGVSLTRADVHGESAYNADLEQVVKDLDAQGLLTESNGAKVVFQEAFRNKEGEALPVIIQKADGGYLYATSDLAAMRYRSNVLKADRVLYFVDLRQALHFQQVFSLAKLAKFVREDMSLEHLGFGTMNGEDGRPFKTRSGGVVKLVDLLEEANVRALELVRSKNPDMDEETLAEIARVVGISAVKYADLSKNRTSDYIFSFEQMLSFEGNTAPYLLYAYTRVAGIFKRVTGLDLSQAKIVLEHEKEKDLGNKLAQFGEILNRVVDKGQPHVLCAYLYELAGAFSSFYEACPVLAADNDEQKNSRLLLSQLTARTLQKGLNLLGIETLERM</sequence>
<keyword id="KW-0030">Aminoacyl-tRNA synthetase</keyword>
<keyword id="KW-0067">ATP-binding</keyword>
<keyword id="KW-0963">Cytoplasm</keyword>
<keyword id="KW-0436">Ligase</keyword>
<keyword id="KW-0547">Nucleotide-binding</keyword>
<keyword id="KW-0648">Protein biosynthesis</keyword>
<name>SYR_SHEPC</name>
<evidence type="ECO:0000255" key="1">
    <source>
        <dbReference type="HAMAP-Rule" id="MF_00123"/>
    </source>
</evidence>
<dbReference type="EC" id="6.1.1.19" evidence="1"/>
<dbReference type="EMBL" id="CP000681">
    <property type="protein sequence ID" value="ABP74282.1"/>
    <property type="molecule type" value="Genomic_DNA"/>
</dbReference>
<dbReference type="SMR" id="A4Y2U9"/>
<dbReference type="STRING" id="319224.Sputcn32_0550"/>
<dbReference type="KEGG" id="spc:Sputcn32_0550"/>
<dbReference type="eggNOG" id="COG0018">
    <property type="taxonomic scope" value="Bacteria"/>
</dbReference>
<dbReference type="HOGENOM" id="CLU_006406_5_1_6"/>
<dbReference type="GO" id="GO:0005737">
    <property type="term" value="C:cytoplasm"/>
    <property type="evidence" value="ECO:0007669"/>
    <property type="project" value="UniProtKB-SubCell"/>
</dbReference>
<dbReference type="GO" id="GO:0004814">
    <property type="term" value="F:arginine-tRNA ligase activity"/>
    <property type="evidence" value="ECO:0007669"/>
    <property type="project" value="UniProtKB-UniRule"/>
</dbReference>
<dbReference type="GO" id="GO:0005524">
    <property type="term" value="F:ATP binding"/>
    <property type="evidence" value="ECO:0007669"/>
    <property type="project" value="UniProtKB-UniRule"/>
</dbReference>
<dbReference type="GO" id="GO:0006420">
    <property type="term" value="P:arginyl-tRNA aminoacylation"/>
    <property type="evidence" value="ECO:0007669"/>
    <property type="project" value="UniProtKB-UniRule"/>
</dbReference>
<dbReference type="CDD" id="cd07956">
    <property type="entry name" value="Anticodon_Ia_Arg"/>
    <property type="match status" value="1"/>
</dbReference>
<dbReference type="CDD" id="cd00671">
    <property type="entry name" value="ArgRS_core"/>
    <property type="match status" value="1"/>
</dbReference>
<dbReference type="FunFam" id="1.10.730.10:FF:000001">
    <property type="entry name" value="Arginine--tRNA ligase"/>
    <property type="match status" value="1"/>
</dbReference>
<dbReference type="FunFam" id="3.30.1360.70:FF:000003">
    <property type="entry name" value="Arginine--tRNA ligase"/>
    <property type="match status" value="1"/>
</dbReference>
<dbReference type="FunFam" id="3.40.50.620:FF:000030">
    <property type="entry name" value="Arginine--tRNA ligase"/>
    <property type="match status" value="1"/>
</dbReference>
<dbReference type="Gene3D" id="3.30.1360.70">
    <property type="entry name" value="Arginyl tRNA synthetase N-terminal domain"/>
    <property type="match status" value="1"/>
</dbReference>
<dbReference type="Gene3D" id="3.40.50.620">
    <property type="entry name" value="HUPs"/>
    <property type="match status" value="1"/>
</dbReference>
<dbReference type="Gene3D" id="1.10.730.10">
    <property type="entry name" value="Isoleucyl-tRNA Synthetase, Domain 1"/>
    <property type="match status" value="1"/>
</dbReference>
<dbReference type="HAMAP" id="MF_00123">
    <property type="entry name" value="Arg_tRNA_synth"/>
    <property type="match status" value="1"/>
</dbReference>
<dbReference type="InterPro" id="IPR001412">
    <property type="entry name" value="aa-tRNA-synth_I_CS"/>
</dbReference>
<dbReference type="InterPro" id="IPR001278">
    <property type="entry name" value="Arg-tRNA-ligase"/>
</dbReference>
<dbReference type="InterPro" id="IPR005148">
    <property type="entry name" value="Arg-tRNA-synth_N"/>
</dbReference>
<dbReference type="InterPro" id="IPR036695">
    <property type="entry name" value="Arg-tRNA-synth_N_sf"/>
</dbReference>
<dbReference type="InterPro" id="IPR035684">
    <property type="entry name" value="ArgRS_core"/>
</dbReference>
<dbReference type="InterPro" id="IPR008909">
    <property type="entry name" value="DALR_anticod-bd"/>
</dbReference>
<dbReference type="InterPro" id="IPR014729">
    <property type="entry name" value="Rossmann-like_a/b/a_fold"/>
</dbReference>
<dbReference type="InterPro" id="IPR009080">
    <property type="entry name" value="tRNAsynth_Ia_anticodon-bd"/>
</dbReference>
<dbReference type="NCBIfam" id="TIGR00456">
    <property type="entry name" value="argS"/>
    <property type="match status" value="1"/>
</dbReference>
<dbReference type="PANTHER" id="PTHR11956:SF5">
    <property type="entry name" value="ARGININE--TRNA LIGASE, CYTOPLASMIC"/>
    <property type="match status" value="1"/>
</dbReference>
<dbReference type="PANTHER" id="PTHR11956">
    <property type="entry name" value="ARGINYL-TRNA SYNTHETASE"/>
    <property type="match status" value="1"/>
</dbReference>
<dbReference type="Pfam" id="PF03485">
    <property type="entry name" value="Arg_tRNA_synt_N"/>
    <property type="match status" value="1"/>
</dbReference>
<dbReference type="Pfam" id="PF05746">
    <property type="entry name" value="DALR_1"/>
    <property type="match status" value="1"/>
</dbReference>
<dbReference type="Pfam" id="PF00750">
    <property type="entry name" value="tRNA-synt_1d"/>
    <property type="match status" value="1"/>
</dbReference>
<dbReference type="PRINTS" id="PR01038">
    <property type="entry name" value="TRNASYNTHARG"/>
</dbReference>
<dbReference type="SMART" id="SM01016">
    <property type="entry name" value="Arg_tRNA_synt_N"/>
    <property type="match status" value="1"/>
</dbReference>
<dbReference type="SMART" id="SM00836">
    <property type="entry name" value="DALR_1"/>
    <property type="match status" value="1"/>
</dbReference>
<dbReference type="SUPFAM" id="SSF47323">
    <property type="entry name" value="Anticodon-binding domain of a subclass of class I aminoacyl-tRNA synthetases"/>
    <property type="match status" value="1"/>
</dbReference>
<dbReference type="SUPFAM" id="SSF55190">
    <property type="entry name" value="Arginyl-tRNA synthetase (ArgRS), N-terminal 'additional' domain"/>
    <property type="match status" value="1"/>
</dbReference>
<dbReference type="SUPFAM" id="SSF52374">
    <property type="entry name" value="Nucleotidylyl transferase"/>
    <property type="match status" value="1"/>
</dbReference>
<dbReference type="PROSITE" id="PS00178">
    <property type="entry name" value="AA_TRNA_LIGASE_I"/>
    <property type="match status" value="1"/>
</dbReference>
<reference key="1">
    <citation type="submission" date="2007-04" db="EMBL/GenBank/DDBJ databases">
        <title>Complete sequence of Shewanella putrefaciens CN-32.</title>
        <authorList>
            <consortium name="US DOE Joint Genome Institute"/>
            <person name="Copeland A."/>
            <person name="Lucas S."/>
            <person name="Lapidus A."/>
            <person name="Barry K."/>
            <person name="Detter J.C."/>
            <person name="Glavina del Rio T."/>
            <person name="Hammon N."/>
            <person name="Israni S."/>
            <person name="Dalin E."/>
            <person name="Tice H."/>
            <person name="Pitluck S."/>
            <person name="Chain P."/>
            <person name="Malfatti S."/>
            <person name="Shin M."/>
            <person name="Vergez L."/>
            <person name="Schmutz J."/>
            <person name="Larimer F."/>
            <person name="Land M."/>
            <person name="Hauser L."/>
            <person name="Kyrpides N."/>
            <person name="Mikhailova N."/>
            <person name="Romine M.F."/>
            <person name="Fredrickson J."/>
            <person name="Tiedje J."/>
            <person name="Richardson P."/>
        </authorList>
    </citation>
    <scope>NUCLEOTIDE SEQUENCE [LARGE SCALE GENOMIC DNA]</scope>
    <source>
        <strain>CN-32 / ATCC BAA-453</strain>
    </source>
</reference>
<proteinExistence type="inferred from homology"/>
<accession>A4Y2U9</accession>
<gene>
    <name evidence="1" type="primary">argS</name>
    <name type="ordered locus">Sputcn32_0550</name>
</gene>
<protein>
    <recommendedName>
        <fullName evidence="1">Arginine--tRNA ligase</fullName>
        <ecNumber evidence="1">6.1.1.19</ecNumber>
    </recommendedName>
    <alternativeName>
        <fullName evidence="1">Arginyl-tRNA synthetase</fullName>
        <shortName evidence="1">ArgRS</shortName>
    </alternativeName>
</protein>
<comment type="catalytic activity">
    <reaction evidence="1">
        <text>tRNA(Arg) + L-arginine + ATP = L-arginyl-tRNA(Arg) + AMP + diphosphate</text>
        <dbReference type="Rhea" id="RHEA:20301"/>
        <dbReference type="Rhea" id="RHEA-COMP:9658"/>
        <dbReference type="Rhea" id="RHEA-COMP:9673"/>
        <dbReference type="ChEBI" id="CHEBI:30616"/>
        <dbReference type="ChEBI" id="CHEBI:32682"/>
        <dbReference type="ChEBI" id="CHEBI:33019"/>
        <dbReference type="ChEBI" id="CHEBI:78442"/>
        <dbReference type="ChEBI" id="CHEBI:78513"/>
        <dbReference type="ChEBI" id="CHEBI:456215"/>
        <dbReference type="EC" id="6.1.1.19"/>
    </reaction>
</comment>
<comment type="subunit">
    <text evidence="1">Monomer.</text>
</comment>
<comment type="subcellular location">
    <subcellularLocation>
        <location evidence="1">Cytoplasm</location>
    </subcellularLocation>
</comment>
<comment type="similarity">
    <text evidence="1">Belongs to the class-I aminoacyl-tRNA synthetase family.</text>
</comment>
<organism>
    <name type="scientific">Shewanella putrefaciens (strain CN-32 / ATCC BAA-453)</name>
    <dbReference type="NCBI Taxonomy" id="319224"/>
    <lineage>
        <taxon>Bacteria</taxon>
        <taxon>Pseudomonadati</taxon>
        <taxon>Pseudomonadota</taxon>
        <taxon>Gammaproteobacteria</taxon>
        <taxon>Alteromonadales</taxon>
        <taxon>Shewanellaceae</taxon>
        <taxon>Shewanella</taxon>
    </lineage>
</organism>